<keyword id="KW-0028">Amino-acid biosynthesis</keyword>
<keyword id="KW-0057">Aromatic amino acid biosynthesis</keyword>
<keyword id="KW-0521">NADP</keyword>
<keyword id="KW-0560">Oxidoreductase</keyword>
<accession>A6UU64</accession>
<organism>
    <name type="scientific">Methanococcus aeolicus (strain ATCC BAA-1280 / DSM 17508 / OCM 812 / Nankai-3)</name>
    <dbReference type="NCBI Taxonomy" id="419665"/>
    <lineage>
        <taxon>Archaea</taxon>
        <taxon>Methanobacteriati</taxon>
        <taxon>Methanobacteriota</taxon>
        <taxon>Methanomada group</taxon>
        <taxon>Methanococci</taxon>
        <taxon>Methanococcales</taxon>
        <taxon>Methanococcaceae</taxon>
        <taxon>Methanococcus</taxon>
    </lineage>
</organism>
<evidence type="ECO:0000255" key="1">
    <source>
        <dbReference type="HAMAP-Rule" id="MF_00222"/>
    </source>
</evidence>
<dbReference type="EC" id="1.1.1.25" evidence="1"/>
<dbReference type="EMBL" id="CP000743">
    <property type="protein sequence ID" value="ABR56036.1"/>
    <property type="molecule type" value="Genomic_DNA"/>
</dbReference>
<dbReference type="RefSeq" id="WP_011973168.1">
    <property type="nucleotide sequence ID" value="NC_009635.1"/>
</dbReference>
<dbReference type="SMR" id="A6UU64"/>
<dbReference type="STRING" id="419665.Maeo_0450"/>
<dbReference type="GeneID" id="5326852"/>
<dbReference type="GeneID" id="75305297"/>
<dbReference type="KEGG" id="mae:Maeo_0450"/>
<dbReference type="eggNOG" id="arCOG01033">
    <property type="taxonomic scope" value="Archaea"/>
</dbReference>
<dbReference type="HOGENOM" id="CLU_044063_4_1_2"/>
<dbReference type="OrthoDB" id="8744at2157"/>
<dbReference type="UniPathway" id="UPA00053">
    <property type="reaction ID" value="UER00087"/>
</dbReference>
<dbReference type="Proteomes" id="UP000001106">
    <property type="component" value="Chromosome"/>
</dbReference>
<dbReference type="GO" id="GO:0050661">
    <property type="term" value="F:NADP binding"/>
    <property type="evidence" value="ECO:0007669"/>
    <property type="project" value="InterPro"/>
</dbReference>
<dbReference type="GO" id="GO:0004764">
    <property type="term" value="F:shikimate 3-dehydrogenase (NADP+) activity"/>
    <property type="evidence" value="ECO:0007669"/>
    <property type="project" value="UniProtKB-UniRule"/>
</dbReference>
<dbReference type="GO" id="GO:0008652">
    <property type="term" value="P:amino acid biosynthetic process"/>
    <property type="evidence" value="ECO:0007669"/>
    <property type="project" value="UniProtKB-KW"/>
</dbReference>
<dbReference type="GO" id="GO:0009073">
    <property type="term" value="P:aromatic amino acid family biosynthetic process"/>
    <property type="evidence" value="ECO:0007669"/>
    <property type="project" value="UniProtKB-KW"/>
</dbReference>
<dbReference type="GO" id="GO:0009423">
    <property type="term" value="P:chorismate biosynthetic process"/>
    <property type="evidence" value="ECO:0007669"/>
    <property type="project" value="UniProtKB-UniRule"/>
</dbReference>
<dbReference type="GO" id="GO:0019632">
    <property type="term" value="P:shikimate metabolic process"/>
    <property type="evidence" value="ECO:0007669"/>
    <property type="project" value="InterPro"/>
</dbReference>
<dbReference type="CDD" id="cd01065">
    <property type="entry name" value="NAD_bind_Shikimate_DH"/>
    <property type="match status" value="1"/>
</dbReference>
<dbReference type="FunFam" id="3.40.50.10860:FF:000004">
    <property type="entry name" value="Quinate/shikimate dehydrogenase"/>
    <property type="match status" value="1"/>
</dbReference>
<dbReference type="Gene3D" id="3.40.50.10860">
    <property type="entry name" value="Leucine Dehydrogenase, chain A, domain 1"/>
    <property type="match status" value="1"/>
</dbReference>
<dbReference type="Gene3D" id="3.40.50.720">
    <property type="entry name" value="NAD(P)-binding Rossmann-like Domain"/>
    <property type="match status" value="1"/>
</dbReference>
<dbReference type="HAMAP" id="MF_00222">
    <property type="entry name" value="Shikimate_DH_AroE"/>
    <property type="match status" value="1"/>
</dbReference>
<dbReference type="InterPro" id="IPR046346">
    <property type="entry name" value="Aminoacid_DH-like_N_sf"/>
</dbReference>
<dbReference type="InterPro" id="IPR036291">
    <property type="entry name" value="NAD(P)-bd_dom_sf"/>
</dbReference>
<dbReference type="InterPro" id="IPR041121">
    <property type="entry name" value="SDH_C"/>
</dbReference>
<dbReference type="InterPro" id="IPR011342">
    <property type="entry name" value="Shikimate_DH"/>
</dbReference>
<dbReference type="InterPro" id="IPR013708">
    <property type="entry name" value="Shikimate_DH-bd_N"/>
</dbReference>
<dbReference type="InterPro" id="IPR022893">
    <property type="entry name" value="Shikimate_DH_fam"/>
</dbReference>
<dbReference type="InterPro" id="IPR006151">
    <property type="entry name" value="Shikm_DH/Glu-tRNA_Rdtase"/>
</dbReference>
<dbReference type="NCBIfam" id="TIGR00507">
    <property type="entry name" value="aroE"/>
    <property type="match status" value="1"/>
</dbReference>
<dbReference type="NCBIfam" id="NF001314">
    <property type="entry name" value="PRK00258.2-2"/>
    <property type="match status" value="1"/>
</dbReference>
<dbReference type="NCBIfam" id="NF001319">
    <property type="entry name" value="PRK00258.3-3"/>
    <property type="match status" value="1"/>
</dbReference>
<dbReference type="PANTHER" id="PTHR21089:SF1">
    <property type="entry name" value="BIFUNCTIONAL 3-DEHYDROQUINATE DEHYDRATASE_SHIKIMATE DEHYDROGENASE, CHLOROPLASTIC"/>
    <property type="match status" value="1"/>
</dbReference>
<dbReference type="PANTHER" id="PTHR21089">
    <property type="entry name" value="SHIKIMATE DEHYDROGENASE"/>
    <property type="match status" value="1"/>
</dbReference>
<dbReference type="Pfam" id="PF18317">
    <property type="entry name" value="SDH_C"/>
    <property type="match status" value="1"/>
</dbReference>
<dbReference type="Pfam" id="PF01488">
    <property type="entry name" value="Shikimate_DH"/>
    <property type="match status" value="1"/>
</dbReference>
<dbReference type="Pfam" id="PF08501">
    <property type="entry name" value="Shikimate_dh_N"/>
    <property type="match status" value="1"/>
</dbReference>
<dbReference type="SUPFAM" id="SSF53223">
    <property type="entry name" value="Aminoacid dehydrogenase-like, N-terminal domain"/>
    <property type="match status" value="1"/>
</dbReference>
<dbReference type="SUPFAM" id="SSF51735">
    <property type="entry name" value="NAD(P)-binding Rossmann-fold domains"/>
    <property type="match status" value="1"/>
</dbReference>
<sequence length="278" mass="30671">MINSKTKLLGLIGHPVEHSLSPTMHNEAIKDKDLNYVYLAFDVESENLKDVVNGAKAIGWKGFNITIPHKIEIMKYLDKIDNDAKLIGAVNTVKIENNKAIGYNTDGIGARLSIEEIIGEVKDYNILVIGAGGSSRAVCCELAKNNNLTIINRTVEKAEIIANDLSNKLNNAVYYGGLNHNYNMANFDIIINTTSLGMYPNVDNKPPISMQNIKKDAVVMDLIYNPKETLFLKEAKEKGCATINGLGMLIYQGAKSFEIWTGVKPDINIMKNAIIDIL</sequence>
<comment type="function">
    <text evidence="1">Involved in the biosynthesis of the chorismate, which leads to the biosynthesis of aromatic amino acids. Catalyzes the reversible NADPH linked reduction of 3-dehydroshikimate (DHSA) to yield shikimate (SA).</text>
</comment>
<comment type="catalytic activity">
    <reaction evidence="1">
        <text>shikimate + NADP(+) = 3-dehydroshikimate + NADPH + H(+)</text>
        <dbReference type="Rhea" id="RHEA:17737"/>
        <dbReference type="ChEBI" id="CHEBI:15378"/>
        <dbReference type="ChEBI" id="CHEBI:16630"/>
        <dbReference type="ChEBI" id="CHEBI:36208"/>
        <dbReference type="ChEBI" id="CHEBI:57783"/>
        <dbReference type="ChEBI" id="CHEBI:58349"/>
        <dbReference type="EC" id="1.1.1.25"/>
    </reaction>
</comment>
<comment type="pathway">
    <text evidence="1">Metabolic intermediate biosynthesis; chorismate biosynthesis; chorismate from D-erythrose 4-phosphate and phosphoenolpyruvate: step 4/7.</text>
</comment>
<comment type="subunit">
    <text evidence="1">Homodimer.</text>
</comment>
<comment type="similarity">
    <text evidence="1">Belongs to the shikimate dehydrogenase family.</text>
</comment>
<reference key="1">
    <citation type="submission" date="2007-06" db="EMBL/GenBank/DDBJ databases">
        <title>Complete sequence of Methanococcus aeolicus Nankai-3.</title>
        <authorList>
            <consortium name="US DOE Joint Genome Institute"/>
            <person name="Copeland A."/>
            <person name="Lucas S."/>
            <person name="Lapidus A."/>
            <person name="Barry K."/>
            <person name="Glavina del Rio T."/>
            <person name="Dalin E."/>
            <person name="Tice H."/>
            <person name="Pitluck S."/>
            <person name="Chain P."/>
            <person name="Malfatti S."/>
            <person name="Shin M."/>
            <person name="Vergez L."/>
            <person name="Schmutz J."/>
            <person name="Larimer F."/>
            <person name="Land M."/>
            <person name="Hauser L."/>
            <person name="Kyrpides N."/>
            <person name="Lykidis A."/>
            <person name="Sieprawska-Lupa M."/>
            <person name="Whitman W.B."/>
            <person name="Richardson P."/>
        </authorList>
    </citation>
    <scope>NUCLEOTIDE SEQUENCE [LARGE SCALE GENOMIC DNA]</scope>
    <source>
        <strain>ATCC BAA-1280 / DSM 17508 / OCM 812 / Nankai-3</strain>
    </source>
</reference>
<proteinExistence type="inferred from homology"/>
<gene>
    <name evidence="1" type="primary">aroE</name>
    <name type="ordered locus">Maeo_0450</name>
</gene>
<name>AROE_META3</name>
<protein>
    <recommendedName>
        <fullName evidence="1">Shikimate dehydrogenase (NADP(+))</fullName>
        <shortName evidence="1">SDH</shortName>
        <ecNumber evidence="1">1.1.1.25</ecNumber>
    </recommendedName>
</protein>
<feature type="chain" id="PRO_1000021300" description="Shikimate dehydrogenase (NADP(+))">
    <location>
        <begin position="1"/>
        <end position="278"/>
    </location>
</feature>
<feature type="active site" description="Proton acceptor" evidence="1">
    <location>
        <position position="70"/>
    </location>
</feature>
<feature type="binding site" evidence="1">
    <location>
        <begin position="19"/>
        <end position="21"/>
    </location>
    <ligand>
        <name>shikimate</name>
        <dbReference type="ChEBI" id="CHEBI:36208"/>
    </ligand>
</feature>
<feature type="binding site" evidence="1">
    <location>
        <position position="66"/>
    </location>
    <ligand>
        <name>shikimate</name>
        <dbReference type="ChEBI" id="CHEBI:36208"/>
    </ligand>
</feature>
<feature type="binding site" evidence="1">
    <location>
        <position position="91"/>
    </location>
    <ligand>
        <name>shikimate</name>
        <dbReference type="ChEBI" id="CHEBI:36208"/>
    </ligand>
</feature>
<feature type="binding site" evidence="1">
    <location>
        <position position="106"/>
    </location>
    <ligand>
        <name>shikimate</name>
        <dbReference type="ChEBI" id="CHEBI:36208"/>
    </ligand>
</feature>
<feature type="binding site" evidence="1">
    <location>
        <begin position="130"/>
        <end position="134"/>
    </location>
    <ligand>
        <name>NADP(+)</name>
        <dbReference type="ChEBI" id="CHEBI:58349"/>
    </ligand>
</feature>
<feature type="binding site" evidence="1">
    <location>
        <begin position="152"/>
        <end position="157"/>
    </location>
    <ligand>
        <name>NADP(+)</name>
        <dbReference type="ChEBI" id="CHEBI:58349"/>
    </ligand>
</feature>
<feature type="binding site" evidence="1">
    <location>
        <position position="222"/>
    </location>
    <ligand>
        <name>NADP(+)</name>
        <dbReference type="ChEBI" id="CHEBI:58349"/>
    </ligand>
</feature>
<feature type="binding site" evidence="1">
    <location>
        <position position="224"/>
    </location>
    <ligand>
        <name>shikimate</name>
        <dbReference type="ChEBI" id="CHEBI:36208"/>
    </ligand>
</feature>
<feature type="binding site" evidence="1">
    <location>
        <position position="245"/>
    </location>
    <ligand>
        <name>NADP(+)</name>
        <dbReference type="ChEBI" id="CHEBI:58349"/>
    </ligand>
</feature>